<evidence type="ECO:0000255" key="1">
    <source>
        <dbReference type="HAMAP-Rule" id="MF_01367"/>
    </source>
</evidence>
<evidence type="ECO:0000305" key="2"/>
<organism>
    <name type="scientific">Staphylococcus haemolyticus (strain JCSC1435)</name>
    <dbReference type="NCBI Taxonomy" id="279808"/>
    <lineage>
        <taxon>Bacteria</taxon>
        <taxon>Bacillati</taxon>
        <taxon>Bacillota</taxon>
        <taxon>Bacilli</taxon>
        <taxon>Bacillales</taxon>
        <taxon>Staphylococcaceae</taxon>
        <taxon>Staphylococcus</taxon>
    </lineage>
</organism>
<gene>
    <name evidence="1" type="primary">rplN</name>
    <name type="ordered locus">SH0812</name>
</gene>
<accession>Q4L8A4</accession>
<name>RL14_STAHJ</name>
<protein>
    <recommendedName>
        <fullName evidence="1">Large ribosomal subunit protein uL14</fullName>
    </recommendedName>
    <alternativeName>
        <fullName evidence="2">50S ribosomal protein L14</fullName>
    </alternativeName>
</protein>
<proteinExistence type="inferred from homology"/>
<comment type="function">
    <text evidence="1">Binds to 23S rRNA. Forms part of two intersubunit bridges in the 70S ribosome.</text>
</comment>
<comment type="subunit">
    <text evidence="1">Part of the 50S ribosomal subunit. Forms a cluster with proteins L3 and L19. In the 70S ribosome, L14 and L19 interact and together make contacts with the 16S rRNA in bridges B5 and B8.</text>
</comment>
<comment type="similarity">
    <text evidence="1">Belongs to the universal ribosomal protein uL14 family.</text>
</comment>
<sequence>MIQQETRLKVADNSGAREVLTIKVLGGSGRKTANIGDVIVCTVKNATPGGVVKKGDVVKAVVVRTKSGVRRNDGSYIKFDENACVIIRDDKGPRGTRIFGPVARELREGNFMKIVSLAPEVL</sequence>
<dbReference type="EMBL" id="AP006716">
    <property type="protein sequence ID" value="BAE04121.1"/>
    <property type="molecule type" value="Genomic_DNA"/>
</dbReference>
<dbReference type="RefSeq" id="WP_002466492.1">
    <property type="nucleotide sequence ID" value="NC_007168.1"/>
</dbReference>
<dbReference type="SMR" id="Q4L8A4"/>
<dbReference type="GeneID" id="93780201"/>
<dbReference type="KEGG" id="sha:SH0812"/>
<dbReference type="eggNOG" id="COG0093">
    <property type="taxonomic scope" value="Bacteria"/>
</dbReference>
<dbReference type="HOGENOM" id="CLU_095071_2_1_9"/>
<dbReference type="OrthoDB" id="9806379at2"/>
<dbReference type="Proteomes" id="UP000000543">
    <property type="component" value="Chromosome"/>
</dbReference>
<dbReference type="GO" id="GO:0022625">
    <property type="term" value="C:cytosolic large ribosomal subunit"/>
    <property type="evidence" value="ECO:0007669"/>
    <property type="project" value="TreeGrafter"/>
</dbReference>
<dbReference type="GO" id="GO:0070180">
    <property type="term" value="F:large ribosomal subunit rRNA binding"/>
    <property type="evidence" value="ECO:0007669"/>
    <property type="project" value="TreeGrafter"/>
</dbReference>
<dbReference type="GO" id="GO:0003735">
    <property type="term" value="F:structural constituent of ribosome"/>
    <property type="evidence" value="ECO:0007669"/>
    <property type="project" value="InterPro"/>
</dbReference>
<dbReference type="GO" id="GO:0006412">
    <property type="term" value="P:translation"/>
    <property type="evidence" value="ECO:0007669"/>
    <property type="project" value="UniProtKB-UniRule"/>
</dbReference>
<dbReference type="CDD" id="cd00337">
    <property type="entry name" value="Ribosomal_uL14"/>
    <property type="match status" value="1"/>
</dbReference>
<dbReference type="FunFam" id="2.40.150.20:FF:000001">
    <property type="entry name" value="50S ribosomal protein L14"/>
    <property type="match status" value="1"/>
</dbReference>
<dbReference type="Gene3D" id="2.40.150.20">
    <property type="entry name" value="Ribosomal protein L14"/>
    <property type="match status" value="1"/>
</dbReference>
<dbReference type="HAMAP" id="MF_01367">
    <property type="entry name" value="Ribosomal_uL14"/>
    <property type="match status" value="1"/>
</dbReference>
<dbReference type="InterPro" id="IPR000218">
    <property type="entry name" value="Ribosomal_uL14"/>
</dbReference>
<dbReference type="InterPro" id="IPR005745">
    <property type="entry name" value="Ribosomal_uL14_bac-type"/>
</dbReference>
<dbReference type="InterPro" id="IPR019972">
    <property type="entry name" value="Ribosomal_uL14_CS"/>
</dbReference>
<dbReference type="InterPro" id="IPR036853">
    <property type="entry name" value="Ribosomal_uL14_sf"/>
</dbReference>
<dbReference type="NCBIfam" id="TIGR01067">
    <property type="entry name" value="rplN_bact"/>
    <property type="match status" value="1"/>
</dbReference>
<dbReference type="PANTHER" id="PTHR11761">
    <property type="entry name" value="50S/60S RIBOSOMAL PROTEIN L14/L23"/>
    <property type="match status" value="1"/>
</dbReference>
<dbReference type="PANTHER" id="PTHR11761:SF3">
    <property type="entry name" value="LARGE RIBOSOMAL SUBUNIT PROTEIN UL14M"/>
    <property type="match status" value="1"/>
</dbReference>
<dbReference type="Pfam" id="PF00238">
    <property type="entry name" value="Ribosomal_L14"/>
    <property type="match status" value="1"/>
</dbReference>
<dbReference type="SMART" id="SM01374">
    <property type="entry name" value="Ribosomal_L14"/>
    <property type="match status" value="1"/>
</dbReference>
<dbReference type="SUPFAM" id="SSF50193">
    <property type="entry name" value="Ribosomal protein L14"/>
    <property type="match status" value="1"/>
</dbReference>
<dbReference type="PROSITE" id="PS00049">
    <property type="entry name" value="RIBOSOMAL_L14"/>
    <property type="match status" value="1"/>
</dbReference>
<reference key="1">
    <citation type="journal article" date="2005" name="J. Bacteriol.">
        <title>Whole-genome sequencing of Staphylococcus haemolyticus uncovers the extreme plasticity of its genome and the evolution of human-colonizing staphylococcal species.</title>
        <authorList>
            <person name="Takeuchi F."/>
            <person name="Watanabe S."/>
            <person name="Baba T."/>
            <person name="Yuzawa H."/>
            <person name="Ito T."/>
            <person name="Morimoto Y."/>
            <person name="Kuroda M."/>
            <person name="Cui L."/>
            <person name="Takahashi M."/>
            <person name="Ankai A."/>
            <person name="Baba S."/>
            <person name="Fukui S."/>
            <person name="Lee J.C."/>
            <person name="Hiramatsu K."/>
        </authorList>
    </citation>
    <scope>NUCLEOTIDE SEQUENCE [LARGE SCALE GENOMIC DNA]</scope>
    <source>
        <strain>JCSC1435</strain>
    </source>
</reference>
<feature type="chain" id="PRO_0000224020" description="Large ribosomal subunit protein uL14">
    <location>
        <begin position="1"/>
        <end position="122"/>
    </location>
</feature>
<keyword id="KW-0687">Ribonucleoprotein</keyword>
<keyword id="KW-0689">Ribosomal protein</keyword>
<keyword id="KW-0694">RNA-binding</keyword>
<keyword id="KW-0699">rRNA-binding</keyword>